<name>SDHD_PSEAE</name>
<sequence length="448" mass="48219">MILGTPKADWLAEFPRLADLIALRPSEWFNPAIAPSAEALADVGLGAADVADASARLQRFAPLIARLFPETAASGGIIESDLVEVATFHDALRQHYAAELPGRLWLKRDSHLPISGSIKARGGIYEVLAHAERLALEHGLVGLDDDYSRLAEADCRAFFARHRIAVGSTGNLGLSIGIIGAALGFQASVHMSADARQWKKDKLRAHGVTVVEYASDYSVAVEQGRREAAGDPYTHFVDDENSRDLFLGYAVAAERLRGQLDAAGIRVDSEHPLFVHLPCGVGGGPGGVAFGLKLAFGDAVHCLFAEPTHSPCMFLGVYTGRHEQVSVQDFGIDNRTAADGLAVGRPSGFVGRAMQRLLDGYYTVDDDELFRLLALLERSQGIRLEPSALAGATGIARVTREPQGYRERMGLTSARLANATHLVWATGGGMVPETEMRAYLERGRSLLD</sequence>
<feature type="chain" id="PRO_0000185618" description="Probable D-serine dehydratase">
    <location>
        <begin position="1"/>
        <end position="448"/>
    </location>
</feature>
<feature type="modified residue" description="N6-(pyridoxal phosphate)lysine" evidence="1">
    <location>
        <position position="119"/>
    </location>
</feature>
<accession>Q9HYN9</accession>
<reference key="1">
    <citation type="journal article" date="2000" name="Nature">
        <title>Complete genome sequence of Pseudomonas aeruginosa PAO1, an opportunistic pathogen.</title>
        <authorList>
            <person name="Stover C.K."/>
            <person name="Pham X.-Q.T."/>
            <person name="Erwin A.L."/>
            <person name="Mizoguchi S.D."/>
            <person name="Warrener P."/>
            <person name="Hickey M.J."/>
            <person name="Brinkman F.S.L."/>
            <person name="Hufnagle W.O."/>
            <person name="Kowalik D.J."/>
            <person name="Lagrou M."/>
            <person name="Garber R.L."/>
            <person name="Goltry L."/>
            <person name="Tolentino E."/>
            <person name="Westbrock-Wadman S."/>
            <person name="Yuan Y."/>
            <person name="Brody L.L."/>
            <person name="Coulter S.N."/>
            <person name="Folger K.R."/>
            <person name="Kas A."/>
            <person name="Larbig K."/>
            <person name="Lim R.M."/>
            <person name="Smith K.A."/>
            <person name="Spencer D.H."/>
            <person name="Wong G.K.-S."/>
            <person name="Wu Z."/>
            <person name="Paulsen I.T."/>
            <person name="Reizer J."/>
            <person name="Saier M.H. Jr."/>
            <person name="Hancock R.E.W."/>
            <person name="Lory S."/>
            <person name="Olson M.V."/>
        </authorList>
    </citation>
    <scope>NUCLEOTIDE SEQUENCE [LARGE SCALE GENOMIC DNA]</scope>
    <source>
        <strain>ATCC 15692 / DSM 22644 / CIP 104116 / JCM 14847 / LMG 12228 / 1C / PRS 101 / PAO1</strain>
    </source>
</reference>
<proteinExistence type="inferred from homology"/>
<organism>
    <name type="scientific">Pseudomonas aeruginosa (strain ATCC 15692 / DSM 22644 / CIP 104116 / JCM 14847 / LMG 12228 / 1C / PRS 101 / PAO1)</name>
    <dbReference type="NCBI Taxonomy" id="208964"/>
    <lineage>
        <taxon>Bacteria</taxon>
        <taxon>Pseudomonadati</taxon>
        <taxon>Pseudomonadota</taxon>
        <taxon>Gammaproteobacteria</taxon>
        <taxon>Pseudomonadales</taxon>
        <taxon>Pseudomonadaceae</taxon>
        <taxon>Pseudomonas</taxon>
    </lineage>
</organism>
<gene>
    <name evidence="1" type="primary">dsdA</name>
    <name type="ordered locus">PA3357</name>
</gene>
<dbReference type="EC" id="4.3.1.18" evidence="1"/>
<dbReference type="EMBL" id="AE004091">
    <property type="protein sequence ID" value="AAG06745.1"/>
    <property type="molecule type" value="Genomic_DNA"/>
</dbReference>
<dbReference type="PIR" id="D83225">
    <property type="entry name" value="D83225"/>
</dbReference>
<dbReference type="RefSeq" id="NP_252047.1">
    <property type="nucleotide sequence ID" value="NC_002516.2"/>
</dbReference>
<dbReference type="RefSeq" id="WP_003113132.1">
    <property type="nucleotide sequence ID" value="NZ_QZGE01000017.1"/>
</dbReference>
<dbReference type="SMR" id="Q9HYN9"/>
<dbReference type="FunCoup" id="Q9HYN9">
    <property type="interactions" value="50"/>
</dbReference>
<dbReference type="STRING" id="208964.PA3357"/>
<dbReference type="PaxDb" id="208964-PA3357"/>
<dbReference type="DNASU" id="882524"/>
<dbReference type="GeneID" id="882524"/>
<dbReference type="KEGG" id="pae:PA3357"/>
<dbReference type="PATRIC" id="fig|208964.12.peg.3516"/>
<dbReference type="PseudoCAP" id="PA3357"/>
<dbReference type="HOGENOM" id="CLU_035707_0_0_6"/>
<dbReference type="InParanoid" id="Q9HYN9"/>
<dbReference type="OrthoDB" id="9780546at2"/>
<dbReference type="PhylomeDB" id="Q9HYN9"/>
<dbReference type="BioCyc" id="PAER208964:G1FZ6-3421-MONOMER"/>
<dbReference type="BRENDA" id="4.3.1.18">
    <property type="organism ID" value="5087"/>
</dbReference>
<dbReference type="Proteomes" id="UP000002438">
    <property type="component" value="Chromosome"/>
</dbReference>
<dbReference type="GO" id="GO:0008721">
    <property type="term" value="F:D-serine ammonia-lyase activity"/>
    <property type="evidence" value="ECO:0000314"/>
    <property type="project" value="PseudoCAP"/>
</dbReference>
<dbReference type="GO" id="GO:0016836">
    <property type="term" value="F:hydro-lyase activity"/>
    <property type="evidence" value="ECO:0007669"/>
    <property type="project" value="UniProtKB-UniRule"/>
</dbReference>
<dbReference type="GO" id="GO:0030170">
    <property type="term" value="F:pyridoxal phosphate binding"/>
    <property type="evidence" value="ECO:0007669"/>
    <property type="project" value="InterPro"/>
</dbReference>
<dbReference type="GO" id="GO:0036088">
    <property type="term" value="P:D-serine catabolic process"/>
    <property type="evidence" value="ECO:0000318"/>
    <property type="project" value="GO_Central"/>
</dbReference>
<dbReference type="Gene3D" id="3.40.50.1100">
    <property type="match status" value="2"/>
</dbReference>
<dbReference type="HAMAP" id="MF_01030">
    <property type="entry name" value="D_Ser_dehydrat"/>
    <property type="match status" value="1"/>
</dbReference>
<dbReference type="InterPro" id="IPR011780">
    <property type="entry name" value="D_Ser_am_lyase"/>
</dbReference>
<dbReference type="InterPro" id="IPR050147">
    <property type="entry name" value="Ser/Thr_Dehydratase"/>
</dbReference>
<dbReference type="InterPro" id="IPR000634">
    <property type="entry name" value="Ser/Thr_deHydtase_PyrdxlP-BS"/>
</dbReference>
<dbReference type="InterPro" id="IPR001926">
    <property type="entry name" value="TrpB-like_PALP"/>
</dbReference>
<dbReference type="InterPro" id="IPR036052">
    <property type="entry name" value="TrpB-like_PALP_sf"/>
</dbReference>
<dbReference type="NCBIfam" id="TIGR02035">
    <property type="entry name" value="D_Ser_am_lyase"/>
    <property type="match status" value="1"/>
</dbReference>
<dbReference type="NCBIfam" id="NF002823">
    <property type="entry name" value="PRK02991.1"/>
    <property type="match status" value="1"/>
</dbReference>
<dbReference type="PANTHER" id="PTHR48078:SF9">
    <property type="entry name" value="D-SERINE DEHYDRATASE"/>
    <property type="match status" value="1"/>
</dbReference>
<dbReference type="PANTHER" id="PTHR48078">
    <property type="entry name" value="THREONINE DEHYDRATASE, MITOCHONDRIAL-RELATED"/>
    <property type="match status" value="1"/>
</dbReference>
<dbReference type="Pfam" id="PF00291">
    <property type="entry name" value="PALP"/>
    <property type="match status" value="1"/>
</dbReference>
<dbReference type="SUPFAM" id="SSF53686">
    <property type="entry name" value="Tryptophan synthase beta subunit-like PLP-dependent enzymes"/>
    <property type="match status" value="1"/>
</dbReference>
<dbReference type="PROSITE" id="PS00165">
    <property type="entry name" value="DEHYDRATASE_SER_THR"/>
    <property type="match status" value="1"/>
</dbReference>
<protein>
    <recommendedName>
        <fullName evidence="1">Probable D-serine dehydratase</fullName>
        <ecNumber evidence="1">4.3.1.18</ecNumber>
    </recommendedName>
    <alternativeName>
        <fullName evidence="1">D-serine deaminase</fullName>
        <shortName evidence="1">DSD</shortName>
    </alternativeName>
</protein>
<keyword id="KW-0456">Lyase</keyword>
<keyword id="KW-0663">Pyridoxal phosphate</keyword>
<keyword id="KW-1185">Reference proteome</keyword>
<comment type="catalytic activity">
    <reaction evidence="1">
        <text>D-serine = pyruvate + NH4(+)</text>
        <dbReference type="Rhea" id="RHEA:13977"/>
        <dbReference type="ChEBI" id="CHEBI:15361"/>
        <dbReference type="ChEBI" id="CHEBI:28938"/>
        <dbReference type="ChEBI" id="CHEBI:35247"/>
        <dbReference type="EC" id="4.3.1.18"/>
    </reaction>
</comment>
<comment type="cofactor">
    <cofactor evidence="1">
        <name>pyridoxal 5'-phosphate</name>
        <dbReference type="ChEBI" id="CHEBI:597326"/>
    </cofactor>
</comment>
<comment type="similarity">
    <text evidence="1">Belongs to the serine/threonine dehydratase family. DsdA subfamily.</text>
</comment>
<evidence type="ECO:0000255" key="1">
    <source>
        <dbReference type="HAMAP-Rule" id="MF_01030"/>
    </source>
</evidence>